<organism>
    <name type="scientific">Yersinia pseudotuberculosis serotype I (strain IP32953)</name>
    <dbReference type="NCBI Taxonomy" id="273123"/>
    <lineage>
        <taxon>Bacteria</taxon>
        <taxon>Pseudomonadati</taxon>
        <taxon>Pseudomonadota</taxon>
        <taxon>Gammaproteobacteria</taxon>
        <taxon>Enterobacterales</taxon>
        <taxon>Yersiniaceae</taxon>
        <taxon>Yersinia</taxon>
    </lineage>
</organism>
<evidence type="ECO:0000255" key="1">
    <source>
        <dbReference type="HAMAP-Rule" id="MF_00652"/>
    </source>
</evidence>
<proteinExistence type="inferred from homology"/>
<dbReference type="EMBL" id="BX936398">
    <property type="protein sequence ID" value="CAH19845.1"/>
    <property type="molecule type" value="Genomic_DNA"/>
</dbReference>
<dbReference type="SMR" id="Q66ET6"/>
<dbReference type="KEGG" id="ypo:BZ17_1951"/>
<dbReference type="KEGG" id="yps:YPTB0605"/>
<dbReference type="PATRIC" id="fig|273123.14.peg.2076"/>
<dbReference type="Proteomes" id="UP000001011">
    <property type="component" value="Chromosome"/>
</dbReference>
<dbReference type="GO" id="GO:0005829">
    <property type="term" value="C:cytosol"/>
    <property type="evidence" value="ECO:0007669"/>
    <property type="project" value="TreeGrafter"/>
</dbReference>
<dbReference type="GO" id="GO:0033194">
    <property type="term" value="P:response to hydroperoxide"/>
    <property type="evidence" value="ECO:0007669"/>
    <property type="project" value="TreeGrafter"/>
</dbReference>
<dbReference type="HAMAP" id="MF_00652">
    <property type="entry name" value="UPF0246"/>
    <property type="match status" value="1"/>
</dbReference>
<dbReference type="InterPro" id="IPR005583">
    <property type="entry name" value="YaaA"/>
</dbReference>
<dbReference type="NCBIfam" id="NF002541">
    <property type="entry name" value="PRK02101.1-1"/>
    <property type="match status" value="1"/>
</dbReference>
<dbReference type="NCBIfam" id="NF002542">
    <property type="entry name" value="PRK02101.1-3"/>
    <property type="match status" value="1"/>
</dbReference>
<dbReference type="PANTHER" id="PTHR30283:SF4">
    <property type="entry name" value="PEROXIDE STRESS RESISTANCE PROTEIN YAAA"/>
    <property type="match status" value="1"/>
</dbReference>
<dbReference type="PANTHER" id="PTHR30283">
    <property type="entry name" value="PEROXIDE STRESS RESPONSE PROTEIN YAAA"/>
    <property type="match status" value="1"/>
</dbReference>
<dbReference type="Pfam" id="PF03883">
    <property type="entry name" value="H2O2_YaaD"/>
    <property type="match status" value="1"/>
</dbReference>
<feature type="chain" id="PRO_0000262078" description="UPF0246 protein YPTB0605">
    <location>
        <begin position="1"/>
        <end position="258"/>
    </location>
</feature>
<name>Y605_YERPS</name>
<protein>
    <recommendedName>
        <fullName evidence="1">UPF0246 protein YPTB0605</fullName>
    </recommendedName>
</protein>
<gene>
    <name type="ordered locus">YPTB0605</name>
</gene>
<comment type="similarity">
    <text evidence="1">Belongs to the UPF0246 family.</text>
</comment>
<sequence>MLIIISPAKTLDYQSPLATTKFSQPEMLDKSQALIEICRELTPAQISSLMGISDKLAGLNAARFSEWQPDFTPANARQAILAFKGDVYTGMQAESFSEADFDFAQQHLRMLSGLYGLLRPLDLMQPYRLEMGTKLANPRGKDLYAFWGDQITEKLNQALELQGDNILINLASDEYFKAVKPAKLSGSLIKPVFLDEKNGKYKIISFYAKKARGLMSRFIIQNKLTKPEQLVDFNLEGYEFDAGLSAKNELVFKRAEQH</sequence>
<accession>Q66ET6</accession>
<reference key="1">
    <citation type="journal article" date="2004" name="Proc. Natl. Acad. Sci. U.S.A.">
        <title>Insights into the evolution of Yersinia pestis through whole-genome comparison with Yersinia pseudotuberculosis.</title>
        <authorList>
            <person name="Chain P.S.G."/>
            <person name="Carniel E."/>
            <person name="Larimer F.W."/>
            <person name="Lamerdin J."/>
            <person name="Stoutland P.O."/>
            <person name="Regala W.M."/>
            <person name="Georgescu A.M."/>
            <person name="Vergez L.M."/>
            <person name="Land M.L."/>
            <person name="Motin V.L."/>
            <person name="Brubaker R.R."/>
            <person name="Fowler J."/>
            <person name="Hinnebusch J."/>
            <person name="Marceau M."/>
            <person name="Medigue C."/>
            <person name="Simonet M."/>
            <person name="Chenal-Francisque V."/>
            <person name="Souza B."/>
            <person name="Dacheux D."/>
            <person name="Elliott J.M."/>
            <person name="Derbise A."/>
            <person name="Hauser L.J."/>
            <person name="Garcia E."/>
        </authorList>
    </citation>
    <scope>NUCLEOTIDE SEQUENCE [LARGE SCALE GENOMIC DNA]</scope>
    <source>
        <strain>IP32953</strain>
    </source>
</reference>